<comment type="function">
    <text evidence="1">Nucleotidase with a broad substrate specificity as it can dephosphorylate various ribo- and deoxyribonucleoside 5'-monophosphates and ribonucleoside 3'-monophosphates with highest affinity to 3'-AMP. Also hydrolyzes polyphosphate (exopolyphosphatase activity) with the preference for short-chain-length substrates (P20-25). Might be involved in the regulation of dNTP and NTP pools, and in the turnover of 3'-mononucleotides produced by numerous intracellular RNases (T1, T2, and F) during the degradation of various RNAs.</text>
</comment>
<comment type="catalytic activity">
    <reaction evidence="1">
        <text>a ribonucleoside 5'-phosphate + H2O = a ribonucleoside + phosphate</text>
        <dbReference type="Rhea" id="RHEA:12484"/>
        <dbReference type="ChEBI" id="CHEBI:15377"/>
        <dbReference type="ChEBI" id="CHEBI:18254"/>
        <dbReference type="ChEBI" id="CHEBI:43474"/>
        <dbReference type="ChEBI" id="CHEBI:58043"/>
        <dbReference type="EC" id="3.1.3.5"/>
    </reaction>
</comment>
<comment type="catalytic activity">
    <reaction evidence="1">
        <text>a ribonucleoside 3'-phosphate + H2O = a ribonucleoside + phosphate</text>
        <dbReference type="Rhea" id="RHEA:10144"/>
        <dbReference type="ChEBI" id="CHEBI:13197"/>
        <dbReference type="ChEBI" id="CHEBI:15377"/>
        <dbReference type="ChEBI" id="CHEBI:18254"/>
        <dbReference type="ChEBI" id="CHEBI:43474"/>
        <dbReference type="EC" id="3.1.3.6"/>
    </reaction>
</comment>
<comment type="catalytic activity">
    <reaction evidence="1">
        <text>[phosphate](n) + H2O = [phosphate](n-1) + phosphate + H(+)</text>
        <dbReference type="Rhea" id="RHEA:21528"/>
        <dbReference type="Rhea" id="RHEA-COMP:9859"/>
        <dbReference type="Rhea" id="RHEA-COMP:14279"/>
        <dbReference type="ChEBI" id="CHEBI:15377"/>
        <dbReference type="ChEBI" id="CHEBI:15378"/>
        <dbReference type="ChEBI" id="CHEBI:16838"/>
        <dbReference type="ChEBI" id="CHEBI:43474"/>
        <dbReference type="EC" id="3.6.1.11"/>
    </reaction>
</comment>
<comment type="cofactor">
    <cofactor evidence="1">
        <name>a divalent metal cation</name>
        <dbReference type="ChEBI" id="CHEBI:60240"/>
    </cofactor>
    <text evidence="1">Binds 1 divalent metal cation per subunit.</text>
</comment>
<comment type="subcellular location">
    <subcellularLocation>
        <location evidence="1">Cytoplasm</location>
    </subcellularLocation>
</comment>
<comment type="similarity">
    <text evidence="1">Belongs to the SurE nucleotidase family.</text>
</comment>
<organism>
    <name type="scientific">Escherichia coli O6:K15:H31 (strain 536 / UPEC)</name>
    <dbReference type="NCBI Taxonomy" id="362663"/>
    <lineage>
        <taxon>Bacteria</taxon>
        <taxon>Pseudomonadati</taxon>
        <taxon>Pseudomonadota</taxon>
        <taxon>Gammaproteobacteria</taxon>
        <taxon>Enterobacterales</taxon>
        <taxon>Enterobacteriaceae</taxon>
        <taxon>Escherichia</taxon>
    </lineage>
</organism>
<keyword id="KW-0963">Cytoplasm</keyword>
<keyword id="KW-0378">Hydrolase</keyword>
<keyword id="KW-0479">Metal-binding</keyword>
<keyword id="KW-0547">Nucleotide-binding</keyword>
<reference key="1">
    <citation type="journal article" date="2006" name="Mol. Microbiol.">
        <title>Role of pathogenicity island-associated integrases in the genome plasticity of uropathogenic Escherichia coli strain 536.</title>
        <authorList>
            <person name="Hochhut B."/>
            <person name="Wilde C."/>
            <person name="Balling G."/>
            <person name="Middendorf B."/>
            <person name="Dobrindt U."/>
            <person name="Brzuszkiewicz E."/>
            <person name="Gottschalk G."/>
            <person name="Carniel E."/>
            <person name="Hacker J."/>
        </authorList>
    </citation>
    <scope>NUCLEOTIDE SEQUENCE [LARGE SCALE GENOMIC DNA]</scope>
    <source>
        <strain>536 / UPEC</strain>
    </source>
</reference>
<evidence type="ECO:0000255" key="1">
    <source>
        <dbReference type="HAMAP-Rule" id="MF_00060"/>
    </source>
</evidence>
<proteinExistence type="inferred from homology"/>
<dbReference type="EC" id="3.1.3.5" evidence="1"/>
<dbReference type="EC" id="3.1.3.6" evidence="1"/>
<dbReference type="EC" id="3.6.1.11" evidence="1"/>
<dbReference type="EMBL" id="CP000247">
    <property type="protein sequence ID" value="ABG70715.1"/>
    <property type="molecule type" value="Genomic_DNA"/>
</dbReference>
<dbReference type="RefSeq" id="WP_001295182.1">
    <property type="nucleotide sequence ID" value="NC_008253.1"/>
</dbReference>
<dbReference type="SMR" id="Q0TEB4"/>
<dbReference type="GeneID" id="93779262"/>
<dbReference type="KEGG" id="ecp:ECP_2726"/>
<dbReference type="HOGENOM" id="CLU_045192_1_2_6"/>
<dbReference type="Proteomes" id="UP000009182">
    <property type="component" value="Chromosome"/>
</dbReference>
<dbReference type="GO" id="GO:0005737">
    <property type="term" value="C:cytoplasm"/>
    <property type="evidence" value="ECO:0007669"/>
    <property type="project" value="UniProtKB-SubCell"/>
</dbReference>
<dbReference type="GO" id="GO:0008254">
    <property type="term" value="F:3'-nucleotidase activity"/>
    <property type="evidence" value="ECO:0007669"/>
    <property type="project" value="UniProtKB-UniRule"/>
</dbReference>
<dbReference type="GO" id="GO:0008253">
    <property type="term" value="F:5'-nucleotidase activity"/>
    <property type="evidence" value="ECO:0007669"/>
    <property type="project" value="UniProtKB-UniRule"/>
</dbReference>
<dbReference type="GO" id="GO:0004309">
    <property type="term" value="F:exopolyphosphatase activity"/>
    <property type="evidence" value="ECO:0007669"/>
    <property type="project" value="UniProtKB-UniRule"/>
</dbReference>
<dbReference type="GO" id="GO:0046872">
    <property type="term" value="F:metal ion binding"/>
    <property type="evidence" value="ECO:0007669"/>
    <property type="project" value="UniProtKB-UniRule"/>
</dbReference>
<dbReference type="GO" id="GO:0000166">
    <property type="term" value="F:nucleotide binding"/>
    <property type="evidence" value="ECO:0007669"/>
    <property type="project" value="UniProtKB-KW"/>
</dbReference>
<dbReference type="FunFam" id="3.40.1210.10:FF:000001">
    <property type="entry name" value="5'/3'-nucleotidase SurE"/>
    <property type="match status" value="1"/>
</dbReference>
<dbReference type="Gene3D" id="3.40.1210.10">
    <property type="entry name" value="Survival protein SurE-like phosphatase/nucleotidase"/>
    <property type="match status" value="1"/>
</dbReference>
<dbReference type="HAMAP" id="MF_00060">
    <property type="entry name" value="SurE"/>
    <property type="match status" value="1"/>
</dbReference>
<dbReference type="InterPro" id="IPR030048">
    <property type="entry name" value="SurE"/>
</dbReference>
<dbReference type="InterPro" id="IPR002828">
    <property type="entry name" value="SurE-like_Pase/nucleotidase"/>
</dbReference>
<dbReference type="InterPro" id="IPR036523">
    <property type="entry name" value="SurE-like_sf"/>
</dbReference>
<dbReference type="NCBIfam" id="NF001488">
    <property type="entry name" value="PRK00346.1-1"/>
    <property type="match status" value="1"/>
</dbReference>
<dbReference type="NCBIfam" id="NF001489">
    <property type="entry name" value="PRK00346.1-3"/>
    <property type="match status" value="1"/>
</dbReference>
<dbReference type="NCBIfam" id="NF001490">
    <property type="entry name" value="PRK00346.1-4"/>
    <property type="match status" value="1"/>
</dbReference>
<dbReference type="NCBIfam" id="TIGR00087">
    <property type="entry name" value="surE"/>
    <property type="match status" value="1"/>
</dbReference>
<dbReference type="PANTHER" id="PTHR30457">
    <property type="entry name" value="5'-NUCLEOTIDASE SURE"/>
    <property type="match status" value="1"/>
</dbReference>
<dbReference type="PANTHER" id="PTHR30457:SF12">
    <property type="entry name" value="5'_3'-NUCLEOTIDASE SURE"/>
    <property type="match status" value="1"/>
</dbReference>
<dbReference type="Pfam" id="PF01975">
    <property type="entry name" value="SurE"/>
    <property type="match status" value="1"/>
</dbReference>
<dbReference type="SUPFAM" id="SSF64167">
    <property type="entry name" value="SurE-like"/>
    <property type="match status" value="1"/>
</dbReference>
<accession>Q0TEB4</accession>
<protein>
    <recommendedName>
        <fullName evidence="1">5'/3'-nucleotidase SurE</fullName>
        <ecNumber evidence="1">3.1.3.5</ecNumber>
        <ecNumber evidence="1">3.1.3.6</ecNumber>
    </recommendedName>
    <alternativeName>
        <fullName evidence="1">Exopolyphosphatase</fullName>
        <ecNumber evidence="1">3.6.1.11</ecNumber>
    </alternativeName>
    <alternativeName>
        <fullName evidence="1">Nucleoside monophosphate phosphohydrolase</fullName>
    </alternativeName>
</protein>
<feature type="chain" id="PRO_1000007728" description="5'/3'-nucleotidase SurE">
    <location>
        <begin position="1"/>
        <end position="253"/>
    </location>
</feature>
<feature type="binding site" evidence="1">
    <location>
        <position position="8"/>
    </location>
    <ligand>
        <name>a divalent metal cation</name>
        <dbReference type="ChEBI" id="CHEBI:60240"/>
    </ligand>
</feature>
<feature type="binding site" evidence="1">
    <location>
        <position position="9"/>
    </location>
    <ligand>
        <name>a divalent metal cation</name>
        <dbReference type="ChEBI" id="CHEBI:60240"/>
    </ligand>
</feature>
<feature type="binding site" evidence="1">
    <location>
        <position position="39"/>
    </location>
    <ligand>
        <name>a divalent metal cation</name>
        <dbReference type="ChEBI" id="CHEBI:60240"/>
    </ligand>
</feature>
<feature type="binding site" evidence="1">
    <location>
        <position position="92"/>
    </location>
    <ligand>
        <name>a divalent metal cation</name>
        <dbReference type="ChEBI" id="CHEBI:60240"/>
    </ligand>
</feature>
<gene>
    <name evidence="1" type="primary">surE</name>
    <name type="ordered locus">ECP_2726</name>
</gene>
<sequence length="253" mass="26900">MRILLSNDDGVHAPGIQTLAKALREFADVQVVAPDRNRSGASNSLTLESSLRTFTFENGDIAVQMGTPTDCVYLGVNALMRPRPDIVVSGINAGPNLGDDVIYSGTVAAAMEGRHLGFPALAVSLDGHKHYDTAAAVTCSILRALCKEPLRTGRILNINVPDLPLDQIKGIRVTRCGTRHPADQVIPQQDPRGNTLYWIGPPGGKCDAGPGTDFAAVDEGYVSITPLHVDLTAHSAQDVVSDWLNSVGVGTQW</sequence>
<name>SURE_ECOL5</name>